<gene>
    <name evidence="1" type="primary">rpmI</name>
    <name type="ordered locus">Bsph_4100</name>
</gene>
<protein>
    <recommendedName>
        <fullName evidence="1">Large ribosomal subunit protein bL35</fullName>
    </recommendedName>
    <alternativeName>
        <fullName evidence="2">50S ribosomal protein L35</fullName>
    </alternativeName>
</protein>
<organism>
    <name type="scientific">Lysinibacillus sphaericus (strain C3-41)</name>
    <dbReference type="NCBI Taxonomy" id="444177"/>
    <lineage>
        <taxon>Bacteria</taxon>
        <taxon>Bacillati</taxon>
        <taxon>Bacillota</taxon>
        <taxon>Bacilli</taxon>
        <taxon>Bacillales</taxon>
        <taxon>Bacillaceae</taxon>
        <taxon>Lysinibacillus</taxon>
    </lineage>
</organism>
<accession>B1HWC9</accession>
<feature type="chain" id="PRO_1000127373" description="Large ribosomal subunit protein bL35">
    <location>
        <begin position="1"/>
        <end position="66"/>
    </location>
</feature>
<evidence type="ECO:0000255" key="1">
    <source>
        <dbReference type="HAMAP-Rule" id="MF_00514"/>
    </source>
</evidence>
<evidence type="ECO:0000305" key="2"/>
<sequence length="66" mass="7626">MPKMKTHRGAAKRFKKTGSGKLKYDRAYGSHLFANKSTKQKRHLRKANIVSSGDFKRIKSLLVYMK</sequence>
<reference key="1">
    <citation type="journal article" date="2008" name="J. Bacteriol.">
        <title>Complete genome sequence of the mosquitocidal bacterium Bacillus sphaericus C3-41 and comparison with those of closely related Bacillus species.</title>
        <authorList>
            <person name="Hu X."/>
            <person name="Fan W."/>
            <person name="Han B."/>
            <person name="Liu H."/>
            <person name="Zheng D."/>
            <person name="Li Q."/>
            <person name="Dong W."/>
            <person name="Yan J."/>
            <person name="Gao M."/>
            <person name="Berry C."/>
            <person name="Yuan Z."/>
        </authorList>
    </citation>
    <scope>NUCLEOTIDE SEQUENCE [LARGE SCALE GENOMIC DNA]</scope>
    <source>
        <strain>C3-41</strain>
    </source>
</reference>
<comment type="similarity">
    <text evidence="1">Belongs to the bacterial ribosomal protein bL35 family.</text>
</comment>
<keyword id="KW-0687">Ribonucleoprotein</keyword>
<keyword id="KW-0689">Ribosomal protein</keyword>
<name>RL35_LYSSC</name>
<proteinExistence type="inferred from homology"/>
<dbReference type="EMBL" id="CP000817">
    <property type="protein sequence ID" value="ACA41568.1"/>
    <property type="molecule type" value="Genomic_DNA"/>
</dbReference>
<dbReference type="RefSeq" id="WP_004226312.1">
    <property type="nucleotide sequence ID" value="NC_010382.1"/>
</dbReference>
<dbReference type="SMR" id="B1HWC9"/>
<dbReference type="EnsemblBacteria" id="ACA41568">
    <property type="protein sequence ID" value="ACA41568"/>
    <property type="gene ID" value="Bsph_4100"/>
</dbReference>
<dbReference type="GeneID" id="96599723"/>
<dbReference type="KEGG" id="lsp:Bsph_4100"/>
<dbReference type="HOGENOM" id="CLU_169643_3_0_9"/>
<dbReference type="Proteomes" id="UP000002164">
    <property type="component" value="Chromosome"/>
</dbReference>
<dbReference type="GO" id="GO:0022625">
    <property type="term" value="C:cytosolic large ribosomal subunit"/>
    <property type="evidence" value="ECO:0007669"/>
    <property type="project" value="TreeGrafter"/>
</dbReference>
<dbReference type="GO" id="GO:0003735">
    <property type="term" value="F:structural constituent of ribosome"/>
    <property type="evidence" value="ECO:0007669"/>
    <property type="project" value="InterPro"/>
</dbReference>
<dbReference type="GO" id="GO:0006412">
    <property type="term" value="P:translation"/>
    <property type="evidence" value="ECO:0007669"/>
    <property type="project" value="UniProtKB-UniRule"/>
</dbReference>
<dbReference type="FunFam" id="4.10.410.60:FF:000001">
    <property type="entry name" value="50S ribosomal protein L35"/>
    <property type="match status" value="1"/>
</dbReference>
<dbReference type="Gene3D" id="4.10.410.60">
    <property type="match status" value="1"/>
</dbReference>
<dbReference type="HAMAP" id="MF_00514">
    <property type="entry name" value="Ribosomal_bL35"/>
    <property type="match status" value="1"/>
</dbReference>
<dbReference type="InterPro" id="IPR001706">
    <property type="entry name" value="Ribosomal_bL35"/>
</dbReference>
<dbReference type="InterPro" id="IPR021137">
    <property type="entry name" value="Ribosomal_bL35-like"/>
</dbReference>
<dbReference type="InterPro" id="IPR018265">
    <property type="entry name" value="Ribosomal_bL35_CS"/>
</dbReference>
<dbReference type="InterPro" id="IPR037229">
    <property type="entry name" value="Ribosomal_bL35_sf"/>
</dbReference>
<dbReference type="NCBIfam" id="TIGR00001">
    <property type="entry name" value="rpmI_bact"/>
    <property type="match status" value="1"/>
</dbReference>
<dbReference type="PANTHER" id="PTHR33343">
    <property type="entry name" value="54S RIBOSOMAL PROTEIN BL35M"/>
    <property type="match status" value="1"/>
</dbReference>
<dbReference type="PANTHER" id="PTHR33343:SF1">
    <property type="entry name" value="LARGE RIBOSOMAL SUBUNIT PROTEIN BL35M"/>
    <property type="match status" value="1"/>
</dbReference>
<dbReference type="Pfam" id="PF01632">
    <property type="entry name" value="Ribosomal_L35p"/>
    <property type="match status" value="1"/>
</dbReference>
<dbReference type="PRINTS" id="PR00064">
    <property type="entry name" value="RIBOSOMALL35"/>
</dbReference>
<dbReference type="SUPFAM" id="SSF143034">
    <property type="entry name" value="L35p-like"/>
    <property type="match status" value="1"/>
</dbReference>
<dbReference type="PROSITE" id="PS00936">
    <property type="entry name" value="RIBOSOMAL_L35"/>
    <property type="match status" value="1"/>
</dbReference>